<dbReference type="EC" id="6.3.5.7" evidence="1"/>
<dbReference type="EMBL" id="CP000745">
    <property type="protein sequence ID" value="ABR65823.1"/>
    <property type="molecule type" value="Genomic_DNA"/>
</dbReference>
<dbReference type="SMR" id="A6VH97"/>
<dbReference type="STRING" id="426368.MmarC7_0756"/>
<dbReference type="KEGG" id="mmz:MmarC7_0756"/>
<dbReference type="eggNOG" id="arCOG01717">
    <property type="taxonomic scope" value="Archaea"/>
</dbReference>
<dbReference type="HOGENOM" id="CLU_009600_0_3_2"/>
<dbReference type="OrthoDB" id="7931at2157"/>
<dbReference type="GO" id="GO:0030956">
    <property type="term" value="C:glutamyl-tRNA(Gln) amidotransferase complex"/>
    <property type="evidence" value="ECO:0007669"/>
    <property type="project" value="InterPro"/>
</dbReference>
<dbReference type="GO" id="GO:0005524">
    <property type="term" value="F:ATP binding"/>
    <property type="evidence" value="ECO:0007669"/>
    <property type="project" value="UniProtKB-KW"/>
</dbReference>
<dbReference type="GO" id="GO:0050567">
    <property type="term" value="F:glutaminyl-tRNA synthase (glutamine-hydrolyzing) activity"/>
    <property type="evidence" value="ECO:0007669"/>
    <property type="project" value="UniProtKB-UniRule"/>
</dbReference>
<dbReference type="GO" id="GO:0006412">
    <property type="term" value="P:translation"/>
    <property type="evidence" value="ECO:0007669"/>
    <property type="project" value="UniProtKB-UniRule"/>
</dbReference>
<dbReference type="Gene3D" id="3.90.1300.10">
    <property type="entry name" value="Amidase signature (AS) domain"/>
    <property type="match status" value="1"/>
</dbReference>
<dbReference type="HAMAP" id="MF_00120">
    <property type="entry name" value="GatA"/>
    <property type="match status" value="1"/>
</dbReference>
<dbReference type="InterPro" id="IPR000120">
    <property type="entry name" value="Amidase"/>
</dbReference>
<dbReference type="InterPro" id="IPR020556">
    <property type="entry name" value="Amidase_CS"/>
</dbReference>
<dbReference type="InterPro" id="IPR023631">
    <property type="entry name" value="Amidase_dom"/>
</dbReference>
<dbReference type="InterPro" id="IPR036928">
    <property type="entry name" value="AS_sf"/>
</dbReference>
<dbReference type="InterPro" id="IPR004412">
    <property type="entry name" value="GatA"/>
</dbReference>
<dbReference type="NCBIfam" id="TIGR00132">
    <property type="entry name" value="gatA"/>
    <property type="match status" value="1"/>
</dbReference>
<dbReference type="PANTHER" id="PTHR11895:SF7">
    <property type="entry name" value="GLUTAMYL-TRNA(GLN) AMIDOTRANSFERASE SUBUNIT A, MITOCHONDRIAL"/>
    <property type="match status" value="1"/>
</dbReference>
<dbReference type="PANTHER" id="PTHR11895">
    <property type="entry name" value="TRANSAMIDASE"/>
    <property type="match status" value="1"/>
</dbReference>
<dbReference type="Pfam" id="PF01425">
    <property type="entry name" value="Amidase"/>
    <property type="match status" value="1"/>
</dbReference>
<dbReference type="SUPFAM" id="SSF75304">
    <property type="entry name" value="Amidase signature (AS) enzymes"/>
    <property type="match status" value="1"/>
</dbReference>
<dbReference type="PROSITE" id="PS00571">
    <property type="entry name" value="AMIDASES"/>
    <property type="match status" value="1"/>
</dbReference>
<name>GATA_METM7</name>
<feature type="chain" id="PRO_1000015862" description="Glutamyl-tRNA(Gln) amidotransferase subunit A">
    <location>
        <begin position="1"/>
        <end position="431"/>
    </location>
</feature>
<feature type="active site" description="Charge relay system" evidence="1">
    <location>
        <position position="55"/>
    </location>
</feature>
<feature type="active site" description="Charge relay system" evidence="1">
    <location>
        <position position="130"/>
    </location>
</feature>
<feature type="active site" description="Acyl-ester intermediate" evidence="1">
    <location>
        <position position="154"/>
    </location>
</feature>
<evidence type="ECO:0000255" key="1">
    <source>
        <dbReference type="HAMAP-Rule" id="MF_00120"/>
    </source>
</evidence>
<proteinExistence type="inferred from homology"/>
<keyword id="KW-0067">ATP-binding</keyword>
<keyword id="KW-0436">Ligase</keyword>
<keyword id="KW-0547">Nucleotide-binding</keyword>
<keyword id="KW-0648">Protein biosynthesis</keyword>
<protein>
    <recommendedName>
        <fullName evidence="1">Glutamyl-tRNA(Gln) amidotransferase subunit A</fullName>
        <shortName evidence="1">Glu-ADT subunit A</shortName>
        <ecNumber evidence="1">6.3.5.7</ecNumber>
    </recommendedName>
</protein>
<reference key="1">
    <citation type="submission" date="2007-06" db="EMBL/GenBank/DDBJ databases">
        <title>Complete sequence of Methanococcus maripaludis C7.</title>
        <authorList>
            <consortium name="US DOE Joint Genome Institute"/>
            <person name="Copeland A."/>
            <person name="Lucas S."/>
            <person name="Lapidus A."/>
            <person name="Barry K."/>
            <person name="Glavina del Rio T."/>
            <person name="Dalin E."/>
            <person name="Tice H."/>
            <person name="Pitluck S."/>
            <person name="Clum A."/>
            <person name="Schmutz J."/>
            <person name="Larimer F."/>
            <person name="Land M."/>
            <person name="Hauser L."/>
            <person name="Kyrpides N."/>
            <person name="Anderson I."/>
            <person name="Sieprawska-Lupa M."/>
            <person name="Whitman W.B."/>
            <person name="Richardson P."/>
        </authorList>
    </citation>
    <scope>NUCLEOTIDE SEQUENCE [LARGE SCALE GENOMIC DNA]</scope>
    <source>
        <strain>C7 / ATCC BAA-1331</strain>
    </source>
</reference>
<accession>A6VH97</accession>
<organism>
    <name type="scientific">Methanococcus maripaludis (strain C7 / ATCC BAA-1331)</name>
    <dbReference type="NCBI Taxonomy" id="426368"/>
    <lineage>
        <taxon>Archaea</taxon>
        <taxon>Methanobacteriati</taxon>
        <taxon>Methanobacteriota</taxon>
        <taxon>Methanomada group</taxon>
        <taxon>Methanococci</taxon>
        <taxon>Methanococcales</taxon>
        <taxon>Methanococcaceae</taxon>
        <taxon>Methanococcus</taxon>
    </lineage>
</organism>
<comment type="function">
    <text evidence="1">Allows the formation of correctly charged Gln-tRNA(Gln) through the transamidation of misacylated Glu-tRNA(Gln) in organisms which lack glutaminyl-tRNA synthetase. The reaction takes place in the presence of glutamine and ATP through an activated gamma-phospho-Glu-tRNA(Gln).</text>
</comment>
<comment type="catalytic activity">
    <reaction evidence="1">
        <text>L-glutamyl-tRNA(Gln) + L-glutamine + ATP + H2O = L-glutaminyl-tRNA(Gln) + L-glutamate + ADP + phosphate + H(+)</text>
        <dbReference type="Rhea" id="RHEA:17521"/>
        <dbReference type="Rhea" id="RHEA-COMP:9681"/>
        <dbReference type="Rhea" id="RHEA-COMP:9684"/>
        <dbReference type="ChEBI" id="CHEBI:15377"/>
        <dbReference type="ChEBI" id="CHEBI:15378"/>
        <dbReference type="ChEBI" id="CHEBI:29985"/>
        <dbReference type="ChEBI" id="CHEBI:30616"/>
        <dbReference type="ChEBI" id="CHEBI:43474"/>
        <dbReference type="ChEBI" id="CHEBI:58359"/>
        <dbReference type="ChEBI" id="CHEBI:78520"/>
        <dbReference type="ChEBI" id="CHEBI:78521"/>
        <dbReference type="ChEBI" id="CHEBI:456216"/>
        <dbReference type="EC" id="6.3.5.7"/>
    </reaction>
</comment>
<comment type="subunit">
    <text evidence="1">Heterotrimer of A, B and C subunits.</text>
</comment>
<comment type="similarity">
    <text evidence="1">Belongs to the amidase family. GatA subfamily.</text>
</comment>
<gene>
    <name evidence="1" type="primary">gatA</name>
    <name type="ordered locus">MmarC7_0756</name>
</gene>
<sequence>MITDRVSDYLEKIEKSDVNAFIDVNSEKVLKEAEELEKNDALKNKPLYGKIVAVKSNINVKGYKISCASKTLDNYIGTYDATVVKKLRSQGALIVGMTNMDEFASGSSGETSYFGPTKNPAAMDRIPGGSSSGSAAAVAADLCDMAIGSDTGGSIRNPASHCGIVGFKPSYGVVSRQGLCDLAMSFDQIGPLTKNAEDALVLTNAIKGIDRSDSTSLETPKFEKKDISNYKVGVVKEFMDVTDEKIRNEIEKGIEVFKDMGCKIVDLSYKYIDLALPTYYLINYVEFFSATRKYDGRRYGEFIEEACGEEVLRRILIGKHISEQEFSGKYYKKALQARKSMKKEMLGLFNSADLIVGPTVPKLPHKLGENLSPMEMYAYDVLTVPTNICGICSGVVRCGNISGVPVGLQIQGAPLEDEKVLSAMIEFEKNY</sequence>